<dbReference type="EMBL" id="AL583922">
    <property type="protein sequence ID" value="CAC30535.1"/>
    <property type="molecule type" value="Genomic_DNA"/>
</dbReference>
<dbReference type="PIR" id="B87107">
    <property type="entry name" value="B87107"/>
</dbReference>
<dbReference type="RefSeq" id="NP_302095.1">
    <property type="nucleotide sequence ID" value="NC_002677.1"/>
</dbReference>
<dbReference type="RefSeq" id="WP_010908416.1">
    <property type="nucleotide sequence ID" value="NC_002677.1"/>
</dbReference>
<dbReference type="SMR" id="Q9CBU2"/>
<dbReference type="STRING" id="272631.gene:17575425"/>
<dbReference type="KEGG" id="mle:ML1584"/>
<dbReference type="PATRIC" id="fig|272631.5.peg.2985"/>
<dbReference type="Leproma" id="ML1584"/>
<dbReference type="eggNOG" id="ENOG502ZVDD">
    <property type="taxonomic scope" value="Bacteria"/>
</dbReference>
<dbReference type="HOGENOM" id="CLU_166791_0_0_11"/>
<dbReference type="OrthoDB" id="3401220at2"/>
<dbReference type="Proteomes" id="UP000000806">
    <property type="component" value="Chromosome"/>
</dbReference>
<dbReference type="GO" id="GO:0005886">
    <property type="term" value="C:plasma membrane"/>
    <property type="evidence" value="ECO:0007669"/>
    <property type="project" value="UniProtKB-SubCell"/>
</dbReference>
<dbReference type="InterPro" id="IPR024341">
    <property type="entry name" value="DUF2631"/>
</dbReference>
<dbReference type="Pfam" id="PF10939">
    <property type="entry name" value="DUF2631"/>
    <property type="match status" value="1"/>
</dbReference>
<name>Y1584_MYCLE</name>
<keyword id="KW-1003">Cell membrane</keyword>
<keyword id="KW-0472">Membrane</keyword>
<keyword id="KW-1185">Reference proteome</keyword>
<keyword id="KW-0812">Transmembrane</keyword>
<keyword id="KW-1133">Transmembrane helix</keyword>
<accession>Q9CBU2</accession>
<proteinExistence type="predicted"/>
<organism>
    <name type="scientific">Mycobacterium leprae (strain TN)</name>
    <dbReference type="NCBI Taxonomy" id="272631"/>
    <lineage>
        <taxon>Bacteria</taxon>
        <taxon>Bacillati</taxon>
        <taxon>Actinomycetota</taxon>
        <taxon>Actinomycetes</taxon>
        <taxon>Mycobacteriales</taxon>
        <taxon>Mycobacteriaceae</taxon>
        <taxon>Mycobacterium</taxon>
    </lineage>
</organism>
<reference key="1">
    <citation type="journal article" date="2001" name="Nature">
        <title>Massive gene decay in the leprosy bacillus.</title>
        <authorList>
            <person name="Cole S.T."/>
            <person name="Eiglmeier K."/>
            <person name="Parkhill J."/>
            <person name="James K.D."/>
            <person name="Thomson N.R."/>
            <person name="Wheeler P.R."/>
            <person name="Honore N."/>
            <person name="Garnier T."/>
            <person name="Churcher C.M."/>
            <person name="Harris D.E."/>
            <person name="Mungall K.L."/>
            <person name="Basham D."/>
            <person name="Brown D."/>
            <person name="Chillingworth T."/>
            <person name="Connor R."/>
            <person name="Davies R.M."/>
            <person name="Devlin K."/>
            <person name="Duthoy S."/>
            <person name="Feltwell T."/>
            <person name="Fraser A."/>
            <person name="Hamlin N."/>
            <person name="Holroyd S."/>
            <person name="Hornsby T."/>
            <person name="Jagels K."/>
            <person name="Lacroix C."/>
            <person name="Maclean J."/>
            <person name="Moule S."/>
            <person name="Murphy L.D."/>
            <person name="Oliver K."/>
            <person name="Quail M.A."/>
            <person name="Rajandream M.A."/>
            <person name="Rutherford K.M."/>
            <person name="Rutter S."/>
            <person name="Seeger K."/>
            <person name="Simon S."/>
            <person name="Simmonds M."/>
            <person name="Skelton J."/>
            <person name="Squares R."/>
            <person name="Squares S."/>
            <person name="Stevens K."/>
            <person name="Taylor K."/>
            <person name="Whitehead S."/>
            <person name="Woodward J.R."/>
            <person name="Barrell B.G."/>
        </authorList>
    </citation>
    <scope>NUCLEOTIDE SEQUENCE [LARGE SCALE GENOMIC DNA]</scope>
    <source>
        <strain>TN</strain>
    </source>
</reference>
<comment type="subcellular location">
    <subcellularLocation>
        <location evidence="2">Cell membrane</location>
        <topology evidence="2">Multi-pass membrane protein</topology>
    </subcellularLocation>
</comment>
<comment type="similarity">
    <text evidence="2">To M.tuberculosis Rv2876.</text>
</comment>
<gene>
    <name type="ordered locus">ML1584</name>
</gene>
<feature type="chain" id="PRO_0000104090" description="Uncharacterized protein ML1584">
    <location>
        <begin position="1"/>
        <end position="84"/>
    </location>
</feature>
<feature type="transmembrane region" description="Helical" evidence="1">
    <location>
        <begin position="27"/>
        <end position="47"/>
    </location>
</feature>
<feature type="transmembrane region" description="Helical" evidence="1">
    <location>
        <begin position="52"/>
        <end position="72"/>
    </location>
</feature>
<evidence type="ECO:0000255" key="1"/>
<evidence type="ECO:0000305" key="2"/>
<sequence>MASTEGEHNAGVDPAEVPSVAWGWSRINHHTWHIVGLFAIGLLLAMLRGNHIGHVENWYLIGFAALVFFVLIRDLLGRRRGWIR</sequence>
<protein>
    <recommendedName>
        <fullName>Uncharacterized protein ML1584</fullName>
    </recommendedName>
</protein>